<proteinExistence type="evidence at protein level"/>
<reference key="1">
    <citation type="journal article" date="1999" name="Biochim. Biophys. Acta">
        <title>Induction of hydroxyapatite resorptive activity in bone marrow cell populations resistant to bafilomycin A1 by a factor with restricted expression to bone and brain, neurochondrin.</title>
        <authorList>
            <person name="Ishiduka Y."/>
            <person name="Mochizuki R."/>
            <person name="Yanai K."/>
            <person name="Takatsuka M."/>
            <person name="Nonomura T."/>
            <person name="Niida S."/>
            <person name="Horiguchi H."/>
            <person name="Maeda N."/>
            <person name="Fukamizu A."/>
        </authorList>
    </citation>
    <scope>NUCLEOTIDE SEQUENCE [GENOMIC DNA]</scope>
    <scope>ALTERNATIVE SPLICING (ISOFORMS 1 AND 2)</scope>
    <source>
        <strain>C57BL/6N</strain>
    </source>
</reference>
<reference key="2">
    <citation type="journal article" date="2005" name="Science">
        <title>The transcriptional landscape of the mammalian genome.</title>
        <authorList>
            <person name="Carninci P."/>
            <person name="Kasukawa T."/>
            <person name="Katayama S."/>
            <person name="Gough J."/>
            <person name="Frith M.C."/>
            <person name="Maeda N."/>
            <person name="Oyama R."/>
            <person name="Ravasi T."/>
            <person name="Lenhard B."/>
            <person name="Wells C."/>
            <person name="Kodzius R."/>
            <person name="Shimokawa K."/>
            <person name="Bajic V.B."/>
            <person name="Brenner S.E."/>
            <person name="Batalov S."/>
            <person name="Forrest A.R."/>
            <person name="Zavolan M."/>
            <person name="Davis M.J."/>
            <person name="Wilming L.G."/>
            <person name="Aidinis V."/>
            <person name="Allen J.E."/>
            <person name="Ambesi-Impiombato A."/>
            <person name="Apweiler R."/>
            <person name="Aturaliya R.N."/>
            <person name="Bailey T.L."/>
            <person name="Bansal M."/>
            <person name="Baxter L."/>
            <person name="Beisel K.W."/>
            <person name="Bersano T."/>
            <person name="Bono H."/>
            <person name="Chalk A.M."/>
            <person name="Chiu K.P."/>
            <person name="Choudhary V."/>
            <person name="Christoffels A."/>
            <person name="Clutterbuck D.R."/>
            <person name="Crowe M.L."/>
            <person name="Dalla E."/>
            <person name="Dalrymple B.P."/>
            <person name="de Bono B."/>
            <person name="Della Gatta G."/>
            <person name="di Bernardo D."/>
            <person name="Down T."/>
            <person name="Engstrom P."/>
            <person name="Fagiolini M."/>
            <person name="Faulkner G."/>
            <person name="Fletcher C.F."/>
            <person name="Fukushima T."/>
            <person name="Furuno M."/>
            <person name="Futaki S."/>
            <person name="Gariboldi M."/>
            <person name="Georgii-Hemming P."/>
            <person name="Gingeras T.R."/>
            <person name="Gojobori T."/>
            <person name="Green R.E."/>
            <person name="Gustincich S."/>
            <person name="Harbers M."/>
            <person name="Hayashi Y."/>
            <person name="Hensch T.K."/>
            <person name="Hirokawa N."/>
            <person name="Hill D."/>
            <person name="Huminiecki L."/>
            <person name="Iacono M."/>
            <person name="Ikeo K."/>
            <person name="Iwama A."/>
            <person name="Ishikawa T."/>
            <person name="Jakt M."/>
            <person name="Kanapin A."/>
            <person name="Katoh M."/>
            <person name="Kawasawa Y."/>
            <person name="Kelso J."/>
            <person name="Kitamura H."/>
            <person name="Kitano H."/>
            <person name="Kollias G."/>
            <person name="Krishnan S.P."/>
            <person name="Kruger A."/>
            <person name="Kummerfeld S.K."/>
            <person name="Kurochkin I.V."/>
            <person name="Lareau L.F."/>
            <person name="Lazarevic D."/>
            <person name="Lipovich L."/>
            <person name="Liu J."/>
            <person name="Liuni S."/>
            <person name="McWilliam S."/>
            <person name="Madan Babu M."/>
            <person name="Madera M."/>
            <person name="Marchionni L."/>
            <person name="Matsuda H."/>
            <person name="Matsuzawa S."/>
            <person name="Miki H."/>
            <person name="Mignone F."/>
            <person name="Miyake S."/>
            <person name="Morris K."/>
            <person name="Mottagui-Tabar S."/>
            <person name="Mulder N."/>
            <person name="Nakano N."/>
            <person name="Nakauchi H."/>
            <person name="Ng P."/>
            <person name="Nilsson R."/>
            <person name="Nishiguchi S."/>
            <person name="Nishikawa S."/>
            <person name="Nori F."/>
            <person name="Ohara O."/>
            <person name="Okazaki Y."/>
            <person name="Orlando V."/>
            <person name="Pang K.C."/>
            <person name="Pavan W.J."/>
            <person name="Pavesi G."/>
            <person name="Pesole G."/>
            <person name="Petrovsky N."/>
            <person name="Piazza S."/>
            <person name="Reed J."/>
            <person name="Reid J.F."/>
            <person name="Ring B.Z."/>
            <person name="Ringwald M."/>
            <person name="Rost B."/>
            <person name="Ruan Y."/>
            <person name="Salzberg S.L."/>
            <person name="Sandelin A."/>
            <person name="Schneider C."/>
            <person name="Schoenbach C."/>
            <person name="Sekiguchi K."/>
            <person name="Semple C.A."/>
            <person name="Seno S."/>
            <person name="Sessa L."/>
            <person name="Sheng Y."/>
            <person name="Shibata Y."/>
            <person name="Shimada H."/>
            <person name="Shimada K."/>
            <person name="Silva D."/>
            <person name="Sinclair B."/>
            <person name="Sperling S."/>
            <person name="Stupka E."/>
            <person name="Sugiura K."/>
            <person name="Sultana R."/>
            <person name="Takenaka Y."/>
            <person name="Taki K."/>
            <person name="Tammoja K."/>
            <person name="Tan S.L."/>
            <person name="Tang S."/>
            <person name="Taylor M.S."/>
            <person name="Tegner J."/>
            <person name="Teichmann S.A."/>
            <person name="Ueda H.R."/>
            <person name="van Nimwegen E."/>
            <person name="Verardo R."/>
            <person name="Wei C.L."/>
            <person name="Yagi K."/>
            <person name="Yamanishi H."/>
            <person name="Zabarovsky E."/>
            <person name="Zhu S."/>
            <person name="Zimmer A."/>
            <person name="Hide W."/>
            <person name="Bult C."/>
            <person name="Grimmond S.M."/>
            <person name="Teasdale R.D."/>
            <person name="Liu E.T."/>
            <person name="Brusic V."/>
            <person name="Quackenbush J."/>
            <person name="Wahlestedt C."/>
            <person name="Mattick J.S."/>
            <person name="Hume D.A."/>
            <person name="Kai C."/>
            <person name="Sasaki D."/>
            <person name="Tomaru Y."/>
            <person name="Fukuda S."/>
            <person name="Kanamori-Katayama M."/>
            <person name="Suzuki M."/>
            <person name="Aoki J."/>
            <person name="Arakawa T."/>
            <person name="Iida J."/>
            <person name="Imamura K."/>
            <person name="Itoh M."/>
            <person name="Kato T."/>
            <person name="Kawaji H."/>
            <person name="Kawagashira N."/>
            <person name="Kawashima T."/>
            <person name="Kojima M."/>
            <person name="Kondo S."/>
            <person name="Konno H."/>
            <person name="Nakano K."/>
            <person name="Ninomiya N."/>
            <person name="Nishio T."/>
            <person name="Okada M."/>
            <person name="Plessy C."/>
            <person name="Shibata K."/>
            <person name="Shiraki T."/>
            <person name="Suzuki S."/>
            <person name="Tagami M."/>
            <person name="Waki K."/>
            <person name="Watahiki A."/>
            <person name="Okamura-Oho Y."/>
            <person name="Suzuki H."/>
            <person name="Kawai J."/>
            <person name="Hayashizaki Y."/>
        </authorList>
    </citation>
    <scope>NUCLEOTIDE SEQUENCE [LARGE SCALE MRNA] (ISOFORM 1)</scope>
    <source>
        <strain>C57BL/6J</strain>
        <strain>NOD</strain>
        <tissue>Brain</tissue>
    </source>
</reference>
<reference key="3">
    <citation type="journal article" date="2009" name="PLoS Biol.">
        <title>Lineage-specific biology revealed by a finished genome assembly of the mouse.</title>
        <authorList>
            <person name="Church D.M."/>
            <person name="Goodstadt L."/>
            <person name="Hillier L.W."/>
            <person name="Zody M.C."/>
            <person name="Goldstein S."/>
            <person name="She X."/>
            <person name="Bult C.J."/>
            <person name="Agarwala R."/>
            <person name="Cherry J.L."/>
            <person name="DiCuccio M."/>
            <person name="Hlavina W."/>
            <person name="Kapustin Y."/>
            <person name="Meric P."/>
            <person name="Maglott D."/>
            <person name="Birtle Z."/>
            <person name="Marques A.C."/>
            <person name="Graves T."/>
            <person name="Zhou S."/>
            <person name="Teague B."/>
            <person name="Potamousis K."/>
            <person name="Churas C."/>
            <person name="Place M."/>
            <person name="Herschleb J."/>
            <person name="Runnheim R."/>
            <person name="Forrest D."/>
            <person name="Amos-Landgraf J."/>
            <person name="Schwartz D.C."/>
            <person name="Cheng Z."/>
            <person name="Lindblad-Toh K."/>
            <person name="Eichler E.E."/>
            <person name="Ponting C.P."/>
        </authorList>
    </citation>
    <scope>NUCLEOTIDE SEQUENCE [LARGE SCALE GENOMIC DNA]</scope>
    <source>
        <strain>C57BL/6J</strain>
    </source>
</reference>
<reference key="4">
    <citation type="journal article" date="2004" name="Genome Res.">
        <title>The status, quality, and expansion of the NIH full-length cDNA project: the Mammalian Gene Collection (MGC).</title>
        <authorList>
            <consortium name="The MGC Project Team"/>
        </authorList>
    </citation>
    <scope>NUCLEOTIDE SEQUENCE [LARGE SCALE MRNA] (ISOFORM 1)</scope>
    <source>
        <strain>FVB/N</strain>
        <tissue>Mammary tumor</tissue>
    </source>
</reference>
<reference key="5">
    <citation type="journal article" date="2003" name="DNA Res.">
        <title>Prediction of the coding sequences of mouse homologues of KIAA gene: II. The complete nucleotide sequences of 400 mouse KIAA-homologous cDNAs identified by screening of terminal sequences of cDNA clones randomly sampled from size-fractionated libraries.</title>
        <authorList>
            <person name="Okazaki N."/>
            <person name="Kikuno R."/>
            <person name="Ohara R."/>
            <person name="Inamoto S."/>
            <person name="Aizawa H."/>
            <person name="Yuasa S."/>
            <person name="Nakajima D."/>
            <person name="Nagase T."/>
            <person name="Ohara O."/>
            <person name="Koga H."/>
        </authorList>
    </citation>
    <scope>NUCLEOTIDE SEQUENCE [LARGE SCALE MRNA] OF 78-729</scope>
    <source>
        <tissue>Brain</tissue>
    </source>
</reference>
<reference key="6">
    <citation type="journal article" date="2001" name="Biochem. Biophys. Res. Commun.">
        <title>Semaphorin 4C, a transmembrane semaphorin, associates with a neurite-outgrowth-related protein, SFAP75.</title>
        <authorList>
            <person name="Ohoka Y."/>
            <person name="Hirotani M."/>
            <person name="Sugimoto H."/>
            <person name="Fujioka S."/>
            <person name="Furuyama T."/>
            <person name="Inagaki S."/>
        </authorList>
    </citation>
    <scope>TISSUE SPECIFICITY</scope>
    <scope>INTERACTION WITH SEMA4C</scope>
</reference>
<reference key="7">
    <citation type="journal article" date="2001" name="Neurosci. Lett.">
        <title>Age- and sex-related expression of norbin in the brain cortex of mice.</title>
        <authorList>
            <person name="Mani S.T."/>
            <person name="Kumar R.C."/>
            <person name="Thakur M.K."/>
        </authorList>
    </citation>
    <scope>TISSUE SPECIFICITY</scope>
    <scope>DEVELOPMENTAL STAGE</scope>
</reference>
<reference key="8">
    <citation type="journal article" date="2001" name="Biochem. Biophys. Res. Commun.">
        <authorList>
            <person name="Ohoka Y."/>
            <person name="Hirotani M."/>
            <person name="Sugimoto H."/>
            <person name="Fujioka S."/>
            <person name="Furuyama T."/>
            <person name="Inagaki S."/>
        </authorList>
    </citation>
    <scope>ERRATUM OF PUBMED:11445285</scope>
</reference>
<reference key="9">
    <citation type="journal article" date="2003" name="Biochem. Biophys. Res. Commun.">
        <title>Targeted disruption of the neurochondrin/norbin gene results in embryonic lethality.</title>
        <authorList>
            <person name="Mochizuki R."/>
            <person name="Dateki M."/>
            <person name="Yanai K."/>
            <person name="Ishizuka Y."/>
            <person name="Amizuka N."/>
            <person name="Kawashima H."/>
            <person name="Koga Y."/>
            <person name="Ozawa H."/>
            <person name="Fukamizu A."/>
        </authorList>
    </citation>
    <scope>DISRUPTION PHENOTYPE</scope>
    <scope>DEVELOPMENTAL STAGE</scope>
</reference>
<reference key="10">
    <citation type="journal article" date="2004" name="Dev. Genes Evol.">
        <title>Expression of neurochondrin in the developing and adult mouse brain.</title>
        <authorList>
            <person name="Istvanffy R."/>
            <person name="Vogt Weisenhorn D.M."/>
            <person name="Floss T."/>
            <person name="Wurst W."/>
        </authorList>
    </citation>
    <scope>TISSUE SPECIFICITY</scope>
    <scope>DEVELOPMENTAL STAGE</scope>
</reference>
<reference key="11">
    <citation type="journal article" date="2005" name="J. Biol. Chem.">
        <title>Neurochondrin negatively regulates CaMKII phosphorylation, and nervous system-specific gene disruption results in epileptic seizure.</title>
        <authorList>
            <person name="Dateki M."/>
            <person name="Horii T."/>
            <person name="Kasuya Y."/>
            <person name="Mochizuki R."/>
            <person name="Nagao Y."/>
            <person name="Ishida J."/>
            <person name="Sugiyama F."/>
            <person name="Tanimoto K."/>
            <person name="Yagami K."/>
            <person name="Imai H."/>
            <person name="Fukamizu A."/>
        </authorList>
    </citation>
    <scope>FUNCTION</scope>
    <scope>DISRUPTION PHENOTYPE</scope>
</reference>
<reference key="12">
    <citation type="journal article" date="2008" name="Biochem. Biophys. Res. Commun.">
        <title>Identification of Neurochondrin as a new interaction partner of the FH3 domain of the Diaphanous-related formin Dia1.</title>
        <authorList>
            <person name="Schwaibold E.M."/>
            <person name="Brandt D.T."/>
        </authorList>
    </citation>
    <scope>FUNCTION</scope>
    <scope>INTERACTION WITH DIAPH1</scope>
</reference>
<reference key="13">
    <citation type="journal article" date="2009" name="Science">
        <title>Norbin is an endogenous regulator of metabotropic glutamate receptor 5 signaling.</title>
        <authorList>
            <person name="Wang H."/>
            <person name="Westin L."/>
            <person name="Nong Y."/>
            <person name="Birnbaum S."/>
            <person name="Bendor J."/>
            <person name="Brismar H."/>
            <person name="Nestler E."/>
            <person name="Aperia A."/>
            <person name="Flajolet M."/>
            <person name="Greengard P."/>
        </authorList>
    </citation>
    <scope>FUNCTION</scope>
    <scope>TISSUE SPECIFICITY</scope>
    <scope>DISRUPTION PHENOTYPE</scope>
</reference>
<reference key="14">
    <citation type="journal article" date="2010" name="Cell">
        <title>A tissue-specific atlas of mouse protein phosphorylation and expression.</title>
        <authorList>
            <person name="Huttlin E.L."/>
            <person name="Jedrychowski M.P."/>
            <person name="Elias J.E."/>
            <person name="Goswami T."/>
            <person name="Rad R."/>
            <person name="Beausoleil S.A."/>
            <person name="Villen J."/>
            <person name="Haas W."/>
            <person name="Sowa M.E."/>
            <person name="Gygi S.P."/>
        </authorList>
    </citation>
    <scope>IDENTIFICATION BY MASS SPECTROMETRY [LARGE SCALE ANALYSIS]</scope>
    <source>
        <tissue>Brain</tissue>
        <tissue>Brown adipose tissue</tissue>
        <tissue>Lung</tissue>
        <tissue>Spleen</tissue>
        <tissue>Testis</tissue>
    </source>
</reference>
<reference key="15">
    <citation type="journal article" date="2014" name="Mol. Cell. Proteomics">
        <title>Immunoaffinity enrichment and mass spectrometry analysis of protein methylation.</title>
        <authorList>
            <person name="Guo A."/>
            <person name="Gu H."/>
            <person name="Zhou J."/>
            <person name="Mulhern D."/>
            <person name="Wang Y."/>
            <person name="Lee K.A."/>
            <person name="Yang V."/>
            <person name="Aguiar M."/>
            <person name="Kornhauser J."/>
            <person name="Jia X."/>
            <person name="Ren J."/>
            <person name="Beausoleil S.A."/>
            <person name="Silva J.C."/>
            <person name="Vemulapalli V."/>
            <person name="Bedford M.T."/>
            <person name="Comb M.J."/>
        </authorList>
    </citation>
    <scope>METHYLATION [LARGE SCALE ANALYSIS] AT ARG-75</scope>
    <scope>IDENTIFICATION BY MASS SPECTROMETRY [LARGE SCALE ANALYSIS]</scope>
    <source>
        <tissue>Brain</tissue>
    </source>
</reference>
<evidence type="ECO:0000250" key="1">
    <source>
        <dbReference type="UniProtKB" id="O35095"/>
    </source>
</evidence>
<evidence type="ECO:0000250" key="2">
    <source>
        <dbReference type="UniProtKB" id="Q9UBB6"/>
    </source>
</evidence>
<evidence type="ECO:0000269" key="3">
    <source>
    </source>
</evidence>
<evidence type="ECO:0000269" key="4">
    <source>
    </source>
</evidence>
<evidence type="ECO:0000269" key="5">
    <source>
    </source>
</evidence>
<evidence type="ECO:0000269" key="6">
    <source>
    </source>
</evidence>
<evidence type="ECO:0000269" key="7">
    <source>
    </source>
</evidence>
<evidence type="ECO:0000269" key="8">
    <source>
    </source>
</evidence>
<evidence type="ECO:0000269" key="9">
    <source>
    </source>
</evidence>
<evidence type="ECO:0000305" key="10"/>
<evidence type="ECO:0007744" key="11">
    <source>
    </source>
</evidence>
<feature type="initiator methionine" description="Removed" evidence="2">
    <location>
        <position position="1"/>
    </location>
</feature>
<feature type="chain" id="PRO_0000324618" description="Neurochondrin">
    <location>
        <begin position="2"/>
        <end position="729"/>
    </location>
</feature>
<feature type="modified residue" description="N-acetylserine" evidence="2">
    <location>
        <position position="2"/>
    </location>
</feature>
<feature type="modified residue" description="Phosphoserine" evidence="2">
    <location>
        <position position="2"/>
    </location>
</feature>
<feature type="modified residue" description="Asymmetric dimethylarginine" evidence="11">
    <location>
        <position position="75"/>
    </location>
</feature>
<feature type="modified residue" description="Phosphoserine" evidence="1">
    <location>
        <position position="448"/>
    </location>
</feature>
<feature type="lipid moiety-binding region" description="S-palmitoyl cysteine" evidence="1">
    <location>
        <position position="3"/>
    </location>
</feature>
<feature type="lipid moiety-binding region" description="S-palmitoyl cysteine" evidence="1">
    <location>
        <position position="4"/>
    </location>
</feature>
<feature type="splice variant" id="VSP_032317" description="In isoform 2." evidence="10">
    <location>
        <begin position="1"/>
        <end position="17"/>
    </location>
</feature>
<feature type="sequence conflict" description="In Ref. 5; AAH17126." evidence="10" ref="5">
    <original>A</original>
    <variation>S</variation>
    <location>
        <position position="109"/>
    </location>
</feature>
<feature type="sequence conflict" description="In Ref. 3; BAE41841." evidence="10" ref="3">
    <original>G</original>
    <variation>D</variation>
    <location>
        <position position="164"/>
    </location>
</feature>
<accession>Q9Z0E0</accession>
<accession>Q3TCW4</accession>
<accession>Q80TW1</accession>
<accession>Q91YH7</accession>
<accession>Q9CW81</accession>
<accession>Q9QUQ0</accession>
<name>NCDN_MOUSE</name>
<gene>
    <name type="primary">Ncdn</name>
    <name type="synonym">Kiaa0607</name>
    <name type="synonym">Sfap75</name>
</gene>
<sequence>MSCCDLAAAGQLGKAGIMASDCEPALNQAESRNPTLERYLGALREAKNDSEQFAALLLVTKAVKAGDIDAKTRRRIFDAVGFTFPNRLLTTKEAPDGCPDHVLRALGVALLACFCSDPELASHPQVLNKIPILSTFLTARGDPDDAARRSMIDDTYQCLTAVAGTPRGPRHLIAGGTVSALCQAYLGHGYGFDQALALLVGLLAAAETQCWKEAEPDLLAVLRGLSEDFQRAEDASKFELCQLLPLFLPPTTVPPECHRDLQAGLARILGSKLSSWQRNPALKLAARLAHACGSDWIPVGSSGSKFLALLVNLACVEVRLALEETGTEVKEDVVTACYALMELGIQECTRCEQSLLKEPQKVQLVSIMKEAIGAVIHYLLQVGPEKQKEPFVFASVRILGAWLAEETSSLRKEVCQLLPFLVRYAKTLYEEAEEASDISQQVANLAISPTTPGPSWPGDALRLLLPGWCHLTVEDGPREILIKEGAPSLLCKYFLQQWELTSPGHDTSVLPDSVEIGLQTCCHIFLNLVVTAPGLIKRDACFTSLMNTLMTSLPSLVQQQGRLLLAANVATLGLLMARLLSTSPALQGTPASRGFFAAAILFLSQSHVARATPGSDQAVLALSPDYEGIWADLQELWFLGMQAFTGCVPLLPWLAPAALRSRWPQELLQLLGSVSPNSVKPEMVAAYQGVLVELARANRLCREAMRLQAGEETASHYRMAALEQCLSEP</sequence>
<comment type="function">
    <text evidence="7 8 9">Probably involved in signal transduction, in the nervous system, via increasing cell surface localization of GRM5 and positively regulating its signaling. Required for the spatial learning process. Acts as a negative regulator of Ca(2+)-calmodulin-dependent protein kinase 2 (CaMK2) phosphorylation. May play a role in modulating melanin-concentrating hormone-mediated functions via its interaction with MCHR1 that interferes with G protein-coupled signal transduction. May be involved in bone metabolism. May also be involved in neurite outgrowth.</text>
</comment>
<comment type="subunit">
    <text evidence="1 2 3 8">Interacts with MCHR1 (By similarity). Interacts with SEMA4C (PubMed:11162505). Interacts with DIAPH1 (via FH3 domain) (PubMed:18572016). Interacts with GRM5 (By similarity).</text>
</comment>
<comment type="subcellular location">
    <subcellularLocation>
        <location evidence="1">Cytoplasm</location>
        <location evidence="1">Cytosol</location>
    </subcellularLocation>
    <subcellularLocation>
        <location evidence="1">Endosome membrane</location>
        <topology evidence="1">Lipid-anchor</topology>
    </subcellularLocation>
    <subcellularLocation>
        <location evidence="1">Cell projection</location>
        <location evidence="1">Dendrite</location>
    </subcellularLocation>
    <subcellularLocation>
        <location evidence="1">Postsynapse</location>
    </subcellularLocation>
    <text evidence="1">Localizes to somatic regions of neurons. Localization to endosome membrane requires palmitoylation.</text>
</comment>
<comment type="alternative products">
    <event type="alternative splicing"/>
    <isoform>
        <id>Q9Z0E0-1</id>
        <name>1</name>
        <name>Neurochondrin-1</name>
        <sequence type="displayed"/>
    </isoform>
    <isoform>
        <id>Q9Z0E0-2</id>
        <name>2</name>
        <name>Neurochondrin-2</name>
        <sequence type="described" ref="VSP_032317"/>
    </isoform>
</comment>
<comment type="tissue specificity">
    <text evidence="3 4 6 9">Expressed in the neuronal, chondral and bone tissues. Expressed in dendrites. Enriched in the brain in the surface layer I-IV. In brains, protein level increases in male but decreases in female with advancing age (at protein level). In adult brains, it is highly expressed in the forebrain and hindbrain. Highly expressed in the hippocampus, piriform cortex, septum, amygdaloid complex, medial geniculate nucleus, inferior colliculus, cerebellar nuclei and the nuclei of the Vth, VIIth, and XIIth cranial nerves. In bone tissues, it is expressed in osteoblasts and osteocytes.</text>
</comment>
<comment type="developmental stage">
    <text evidence="4 5 6">In the developing brain, it is first expressed in the hindbrain and spinal cord at 10.5 dpc followed by expression in the midbrain at 11.5 dpc. By 18 dpc it is also expressed in the diencephalon and telencephalon, with a strongest expression in the hindbrain. Highly expressed in the developing olfactory bulb and in the lateral choroid plexus.</text>
</comment>
<comment type="PTM">
    <text evidence="1">Palmitoylated. Palmitoylation by ZDHHC1, ZDHHC3 and ZDHHC11 regulates the association of NCDN with endosome membranes. May also be palmitoylated by ZDHHC7.</text>
</comment>
<comment type="disruption phenotype">
    <text evidence="5 7 9">Death between 3.5 and 6.5 dpc. Heterozygous mutant do not display gross anatomic abnormalities. They however show abnormalities in developing cartilage. Nervous system-specific gene disruption by conditional knockout results in epileptic seizure. Displays no overt neurite outgrowth phenotype (PubMed:15790563). Shows a behavioral phenotype associated with a rodent model of schizophrenia, as observed in alterations in both sensorimotor gating and psychotomimetic-induced locomotor activity.</text>
</comment>
<comment type="similarity">
    <text evidence="10">Belongs to the neurochondrin family.</text>
</comment>
<protein>
    <recommendedName>
        <fullName>Neurochondrin</fullName>
    </recommendedName>
    <alternativeName>
        <fullName>M-Sema F-associating protein of 75 kDa</fullName>
    </alternativeName>
    <alternativeName>
        <fullName>Norbin</fullName>
    </alternativeName>
</protein>
<organism>
    <name type="scientific">Mus musculus</name>
    <name type="common">Mouse</name>
    <dbReference type="NCBI Taxonomy" id="10090"/>
    <lineage>
        <taxon>Eukaryota</taxon>
        <taxon>Metazoa</taxon>
        <taxon>Chordata</taxon>
        <taxon>Craniata</taxon>
        <taxon>Vertebrata</taxon>
        <taxon>Euteleostomi</taxon>
        <taxon>Mammalia</taxon>
        <taxon>Eutheria</taxon>
        <taxon>Euarchontoglires</taxon>
        <taxon>Glires</taxon>
        <taxon>Rodentia</taxon>
        <taxon>Myomorpha</taxon>
        <taxon>Muroidea</taxon>
        <taxon>Muridae</taxon>
        <taxon>Murinae</taxon>
        <taxon>Mus</taxon>
        <taxon>Mus</taxon>
    </lineage>
</organism>
<dbReference type="EMBL" id="AB017608">
    <property type="protein sequence ID" value="BAA75226.1"/>
    <property type="molecule type" value="Genomic_DNA"/>
</dbReference>
<dbReference type="EMBL" id="AB017609">
    <property type="protein sequence ID" value="BAA75227.1"/>
    <property type="molecule type" value="Genomic_DNA"/>
</dbReference>
<dbReference type="EMBL" id="AB019041">
    <property type="protein sequence ID" value="BAA75228.1"/>
    <property type="molecule type" value="Genomic_DNA"/>
</dbReference>
<dbReference type="EMBL" id="AB019041">
    <property type="protein sequence ID" value="BAA75229.1"/>
    <property type="molecule type" value="Genomic_DNA"/>
</dbReference>
<dbReference type="EMBL" id="AK002938">
    <property type="protein sequence ID" value="BAB22468.2"/>
    <property type="molecule type" value="mRNA"/>
</dbReference>
<dbReference type="EMBL" id="AK154889">
    <property type="protein sequence ID" value="BAE32905.1"/>
    <property type="molecule type" value="mRNA"/>
</dbReference>
<dbReference type="EMBL" id="AK170502">
    <property type="protein sequence ID" value="BAE41841.1"/>
    <property type="molecule type" value="mRNA"/>
</dbReference>
<dbReference type="EMBL" id="AL606908">
    <property type="status" value="NOT_ANNOTATED_CDS"/>
    <property type="molecule type" value="Genomic_DNA"/>
</dbReference>
<dbReference type="EMBL" id="BC017126">
    <property type="protein sequence ID" value="AAH17126.1"/>
    <property type="molecule type" value="mRNA"/>
</dbReference>
<dbReference type="EMBL" id="AK122327">
    <property type="protein sequence ID" value="BAC65609.1"/>
    <property type="molecule type" value="mRNA"/>
</dbReference>
<dbReference type="CCDS" id="CCDS18659.1">
    <molecule id="Q9Z0E0-1"/>
</dbReference>
<dbReference type="RefSeq" id="NP_001342341.1">
    <molecule id="Q9Z0E0-2"/>
    <property type="nucleotide sequence ID" value="NM_001355412.2"/>
</dbReference>
<dbReference type="RefSeq" id="NP_001342342.1">
    <molecule id="Q9Z0E0-2"/>
    <property type="nucleotide sequence ID" value="NM_001355413.2"/>
</dbReference>
<dbReference type="RefSeq" id="NP_001411870.1">
    <molecule id="Q9Z0E0-1"/>
    <property type="nucleotide sequence ID" value="NM_001424941.1"/>
</dbReference>
<dbReference type="RefSeq" id="NP_001411871.1">
    <molecule id="Q9Z0E0-2"/>
    <property type="nucleotide sequence ID" value="NM_001424942.1"/>
</dbReference>
<dbReference type="RefSeq" id="NP_036116.3">
    <molecule id="Q9Z0E0-1"/>
    <property type="nucleotide sequence ID" value="NM_011986.4"/>
</dbReference>
<dbReference type="RefSeq" id="XP_006503181.1">
    <property type="nucleotide sequence ID" value="XM_006503118.3"/>
</dbReference>
<dbReference type="RefSeq" id="XP_006503182.1">
    <property type="nucleotide sequence ID" value="XM_006503119.3"/>
</dbReference>
<dbReference type="SMR" id="Q9Z0E0"/>
<dbReference type="BioGRID" id="205020">
    <property type="interactions" value="15"/>
</dbReference>
<dbReference type="FunCoup" id="Q9Z0E0">
    <property type="interactions" value="759"/>
</dbReference>
<dbReference type="IntAct" id="Q9Z0E0">
    <property type="interactions" value="10"/>
</dbReference>
<dbReference type="MINT" id="Q9Z0E0"/>
<dbReference type="STRING" id="10090.ENSMUSP00000030637"/>
<dbReference type="GlyGen" id="Q9Z0E0">
    <property type="glycosylation" value="3 sites, 1 O-linked glycan (1 site)"/>
</dbReference>
<dbReference type="iPTMnet" id="Q9Z0E0"/>
<dbReference type="PhosphoSitePlus" id="Q9Z0E0"/>
<dbReference type="SwissPalm" id="Q9Z0E0"/>
<dbReference type="PaxDb" id="10090-ENSMUSP00000030637"/>
<dbReference type="PeptideAtlas" id="Q9Z0E0"/>
<dbReference type="ProteomicsDB" id="252789">
    <molecule id="Q9Z0E0-1"/>
</dbReference>
<dbReference type="ProteomicsDB" id="252790">
    <molecule id="Q9Z0E0-2"/>
</dbReference>
<dbReference type="Pumba" id="Q9Z0E0"/>
<dbReference type="Antibodypedia" id="17311">
    <property type="antibodies" value="205 antibodies from 28 providers"/>
</dbReference>
<dbReference type="DNASU" id="26562"/>
<dbReference type="Ensembl" id="ENSMUST00000030637.14">
    <molecule id="Q9Z0E0-1"/>
    <property type="protein sequence ID" value="ENSMUSP00000030637.8"/>
    <property type="gene ID" value="ENSMUSG00000028833.14"/>
</dbReference>
<dbReference type="Ensembl" id="ENSMUST00000106116.2">
    <molecule id="Q9Z0E0-1"/>
    <property type="protein sequence ID" value="ENSMUSP00000101722.2"/>
    <property type="gene ID" value="ENSMUSG00000028833.14"/>
</dbReference>
<dbReference type="GeneID" id="26562"/>
<dbReference type="KEGG" id="mmu:26562"/>
<dbReference type="UCSC" id="uc008utt.2">
    <molecule id="Q9Z0E0-1"/>
    <property type="organism name" value="mouse"/>
</dbReference>
<dbReference type="AGR" id="MGI:1347351"/>
<dbReference type="CTD" id="23154"/>
<dbReference type="MGI" id="MGI:1347351">
    <property type="gene designation" value="Ncdn"/>
</dbReference>
<dbReference type="VEuPathDB" id="HostDB:ENSMUSG00000028833"/>
<dbReference type="eggNOG" id="KOG2611">
    <property type="taxonomic scope" value="Eukaryota"/>
</dbReference>
<dbReference type="GeneTree" id="ENSGT00390000013601"/>
<dbReference type="HOGENOM" id="CLU_012443_0_0_1"/>
<dbReference type="InParanoid" id="Q9Z0E0"/>
<dbReference type="OMA" id="IVHYKKP"/>
<dbReference type="OrthoDB" id="8186546at2759"/>
<dbReference type="PhylomeDB" id="Q9Z0E0"/>
<dbReference type="TreeFam" id="TF323752"/>
<dbReference type="BioGRID-ORCS" id="26562">
    <property type="hits" value="9 hits in 78 CRISPR screens"/>
</dbReference>
<dbReference type="CD-CODE" id="CE726F99">
    <property type="entry name" value="Postsynaptic density"/>
</dbReference>
<dbReference type="ChiTaRS" id="Ncdn">
    <property type="organism name" value="mouse"/>
</dbReference>
<dbReference type="PRO" id="PR:Q9Z0E0"/>
<dbReference type="Proteomes" id="UP000000589">
    <property type="component" value="Chromosome 4"/>
</dbReference>
<dbReference type="RNAct" id="Q9Z0E0">
    <property type="molecule type" value="protein"/>
</dbReference>
<dbReference type="Bgee" id="ENSMUSG00000028833">
    <property type="expression patterns" value="Expressed in CA3 field of hippocampus and 246 other cell types or tissues"/>
</dbReference>
<dbReference type="GO" id="GO:0005829">
    <property type="term" value="C:cytosol"/>
    <property type="evidence" value="ECO:0000250"/>
    <property type="project" value="UniProtKB"/>
</dbReference>
<dbReference type="GO" id="GO:0030425">
    <property type="term" value="C:dendrite"/>
    <property type="evidence" value="ECO:0000250"/>
    <property type="project" value="UniProtKB"/>
</dbReference>
<dbReference type="GO" id="GO:0010008">
    <property type="term" value="C:endosome membrane"/>
    <property type="evidence" value="ECO:0007669"/>
    <property type="project" value="UniProtKB-SubCell"/>
</dbReference>
<dbReference type="GO" id="GO:0098978">
    <property type="term" value="C:glutamatergic synapse"/>
    <property type="evidence" value="ECO:0000314"/>
    <property type="project" value="SynGO"/>
</dbReference>
<dbReference type="GO" id="GO:0043005">
    <property type="term" value="C:neuron projection"/>
    <property type="evidence" value="ECO:0000314"/>
    <property type="project" value="UniProtKB"/>
</dbReference>
<dbReference type="GO" id="GO:0043025">
    <property type="term" value="C:neuronal cell body"/>
    <property type="evidence" value="ECO:0000250"/>
    <property type="project" value="UniProtKB"/>
</dbReference>
<dbReference type="GO" id="GO:0043204">
    <property type="term" value="C:perikaryon"/>
    <property type="evidence" value="ECO:0007669"/>
    <property type="project" value="Ensembl"/>
</dbReference>
<dbReference type="GO" id="GO:0098794">
    <property type="term" value="C:postsynapse"/>
    <property type="evidence" value="ECO:0000314"/>
    <property type="project" value="SynGO"/>
</dbReference>
<dbReference type="GO" id="GO:0045453">
    <property type="term" value="P:bone resorption"/>
    <property type="evidence" value="ECO:0000314"/>
    <property type="project" value="MGI"/>
</dbReference>
<dbReference type="GO" id="GO:0031175">
    <property type="term" value="P:neuron projection development"/>
    <property type="evidence" value="ECO:0000314"/>
    <property type="project" value="UniProtKB"/>
</dbReference>
<dbReference type="GO" id="GO:0048168">
    <property type="term" value="P:regulation of neuronal synaptic plasticity"/>
    <property type="evidence" value="ECO:0007669"/>
    <property type="project" value="Ensembl"/>
</dbReference>
<dbReference type="GO" id="GO:0099149">
    <property type="term" value="P:regulation of postsynaptic neurotransmitter receptor internalization"/>
    <property type="evidence" value="ECO:0000314"/>
    <property type="project" value="SynGO"/>
</dbReference>
<dbReference type="InterPro" id="IPR016024">
    <property type="entry name" value="ARM-type_fold"/>
</dbReference>
<dbReference type="InterPro" id="IPR008709">
    <property type="entry name" value="Neurochondrin"/>
</dbReference>
<dbReference type="PANTHER" id="PTHR13109">
    <property type="entry name" value="NEUROCHONDRIN"/>
    <property type="match status" value="1"/>
</dbReference>
<dbReference type="PANTHER" id="PTHR13109:SF7">
    <property type="entry name" value="NEUROCHONDRIN"/>
    <property type="match status" value="1"/>
</dbReference>
<dbReference type="Pfam" id="PF05536">
    <property type="entry name" value="Neurochondrin"/>
    <property type="match status" value="1"/>
</dbReference>
<dbReference type="SUPFAM" id="SSF48371">
    <property type="entry name" value="ARM repeat"/>
    <property type="match status" value="1"/>
</dbReference>
<keyword id="KW-0007">Acetylation</keyword>
<keyword id="KW-0025">Alternative splicing</keyword>
<keyword id="KW-0966">Cell projection</keyword>
<keyword id="KW-0963">Cytoplasm</keyword>
<keyword id="KW-0967">Endosome</keyword>
<keyword id="KW-0449">Lipoprotein</keyword>
<keyword id="KW-0472">Membrane</keyword>
<keyword id="KW-0488">Methylation</keyword>
<keyword id="KW-0564">Palmitate</keyword>
<keyword id="KW-0597">Phosphoprotein</keyword>
<keyword id="KW-1185">Reference proteome</keyword>
<keyword id="KW-0770">Synapse</keyword>